<keyword id="KW-1185">Reference proteome</keyword>
<dbReference type="EMBL" id="AL009126">
    <property type="protein sequence ID" value="CAB14058.1"/>
    <property type="molecule type" value="Genomic_DNA"/>
</dbReference>
<dbReference type="RefSeq" id="NP_390023.1">
    <property type="nucleotide sequence ID" value="NC_000964.3"/>
</dbReference>
<dbReference type="RefSeq" id="WP_004398829.1">
    <property type="nucleotide sequence ID" value="NZ_OZ025638.1"/>
</dbReference>
<dbReference type="FunCoup" id="O31981">
    <property type="interactions" value="126"/>
</dbReference>
<dbReference type="STRING" id="224308.BSU21400"/>
<dbReference type="PaxDb" id="224308-BSU21400"/>
<dbReference type="DNASU" id="939131"/>
<dbReference type="EnsemblBacteria" id="CAB14058">
    <property type="protein sequence ID" value="CAB14058"/>
    <property type="gene ID" value="BSU_21400"/>
</dbReference>
<dbReference type="GeneID" id="939131"/>
<dbReference type="KEGG" id="bsu:BSU21400"/>
<dbReference type="PATRIC" id="fig|224308.179.peg.2336"/>
<dbReference type="eggNOG" id="ENOG5030IFH">
    <property type="taxonomic scope" value="Bacteria"/>
</dbReference>
<dbReference type="InParanoid" id="O31981"/>
<dbReference type="OrthoDB" id="2086462at2"/>
<dbReference type="BioCyc" id="BSUB:BSU21400-MONOMER"/>
<dbReference type="Proteomes" id="UP000001570">
    <property type="component" value="Chromosome"/>
</dbReference>
<dbReference type="InterPro" id="IPR048793">
    <property type="entry name" value="CapR_dom"/>
</dbReference>
<dbReference type="Pfam" id="PF21817">
    <property type="entry name" value="CapR"/>
    <property type="match status" value="1"/>
</dbReference>
<protein>
    <recommendedName>
        <fullName>SPbeta prophage-derived uncharacterized protein YomD</fullName>
    </recommendedName>
</protein>
<organism>
    <name type="scientific">Bacillus subtilis (strain 168)</name>
    <dbReference type="NCBI Taxonomy" id="224308"/>
    <lineage>
        <taxon>Bacteria</taxon>
        <taxon>Bacillati</taxon>
        <taxon>Bacillota</taxon>
        <taxon>Bacilli</taxon>
        <taxon>Bacillales</taxon>
        <taxon>Bacillaceae</taxon>
        <taxon>Bacillus</taxon>
    </lineage>
</organism>
<gene>
    <name type="primary">yomD</name>
    <name type="ordered locus">BSU21400</name>
</gene>
<name>YOMD_BACSU</name>
<reference key="1">
    <citation type="journal article" date="1997" name="Nature">
        <title>The complete genome sequence of the Gram-positive bacterium Bacillus subtilis.</title>
        <authorList>
            <person name="Kunst F."/>
            <person name="Ogasawara N."/>
            <person name="Moszer I."/>
            <person name="Albertini A.M."/>
            <person name="Alloni G."/>
            <person name="Azevedo V."/>
            <person name="Bertero M.G."/>
            <person name="Bessieres P."/>
            <person name="Bolotin A."/>
            <person name="Borchert S."/>
            <person name="Borriss R."/>
            <person name="Boursier L."/>
            <person name="Brans A."/>
            <person name="Braun M."/>
            <person name="Brignell S.C."/>
            <person name="Bron S."/>
            <person name="Brouillet S."/>
            <person name="Bruschi C.V."/>
            <person name="Caldwell B."/>
            <person name="Capuano V."/>
            <person name="Carter N.M."/>
            <person name="Choi S.-K."/>
            <person name="Codani J.-J."/>
            <person name="Connerton I.F."/>
            <person name="Cummings N.J."/>
            <person name="Daniel R.A."/>
            <person name="Denizot F."/>
            <person name="Devine K.M."/>
            <person name="Duesterhoeft A."/>
            <person name="Ehrlich S.D."/>
            <person name="Emmerson P.T."/>
            <person name="Entian K.-D."/>
            <person name="Errington J."/>
            <person name="Fabret C."/>
            <person name="Ferrari E."/>
            <person name="Foulger D."/>
            <person name="Fritz C."/>
            <person name="Fujita M."/>
            <person name="Fujita Y."/>
            <person name="Fuma S."/>
            <person name="Galizzi A."/>
            <person name="Galleron N."/>
            <person name="Ghim S.-Y."/>
            <person name="Glaser P."/>
            <person name="Goffeau A."/>
            <person name="Golightly E.J."/>
            <person name="Grandi G."/>
            <person name="Guiseppi G."/>
            <person name="Guy B.J."/>
            <person name="Haga K."/>
            <person name="Haiech J."/>
            <person name="Harwood C.R."/>
            <person name="Henaut A."/>
            <person name="Hilbert H."/>
            <person name="Holsappel S."/>
            <person name="Hosono S."/>
            <person name="Hullo M.-F."/>
            <person name="Itaya M."/>
            <person name="Jones L.-M."/>
            <person name="Joris B."/>
            <person name="Karamata D."/>
            <person name="Kasahara Y."/>
            <person name="Klaerr-Blanchard M."/>
            <person name="Klein C."/>
            <person name="Kobayashi Y."/>
            <person name="Koetter P."/>
            <person name="Koningstein G."/>
            <person name="Krogh S."/>
            <person name="Kumano M."/>
            <person name="Kurita K."/>
            <person name="Lapidus A."/>
            <person name="Lardinois S."/>
            <person name="Lauber J."/>
            <person name="Lazarevic V."/>
            <person name="Lee S.-M."/>
            <person name="Levine A."/>
            <person name="Liu H."/>
            <person name="Masuda S."/>
            <person name="Mauel C."/>
            <person name="Medigue C."/>
            <person name="Medina N."/>
            <person name="Mellado R.P."/>
            <person name="Mizuno M."/>
            <person name="Moestl D."/>
            <person name="Nakai S."/>
            <person name="Noback M."/>
            <person name="Noone D."/>
            <person name="O'Reilly M."/>
            <person name="Ogawa K."/>
            <person name="Ogiwara A."/>
            <person name="Oudega B."/>
            <person name="Park S.-H."/>
            <person name="Parro V."/>
            <person name="Pohl T.M."/>
            <person name="Portetelle D."/>
            <person name="Porwollik S."/>
            <person name="Prescott A.M."/>
            <person name="Presecan E."/>
            <person name="Pujic P."/>
            <person name="Purnelle B."/>
            <person name="Rapoport G."/>
            <person name="Rey M."/>
            <person name="Reynolds S."/>
            <person name="Rieger M."/>
            <person name="Rivolta C."/>
            <person name="Rocha E."/>
            <person name="Roche B."/>
            <person name="Rose M."/>
            <person name="Sadaie Y."/>
            <person name="Sato T."/>
            <person name="Scanlan E."/>
            <person name="Schleich S."/>
            <person name="Schroeter R."/>
            <person name="Scoffone F."/>
            <person name="Sekiguchi J."/>
            <person name="Sekowska A."/>
            <person name="Seror S.J."/>
            <person name="Serror P."/>
            <person name="Shin B.-S."/>
            <person name="Soldo B."/>
            <person name="Sorokin A."/>
            <person name="Tacconi E."/>
            <person name="Takagi T."/>
            <person name="Takahashi H."/>
            <person name="Takemaru K."/>
            <person name="Takeuchi M."/>
            <person name="Tamakoshi A."/>
            <person name="Tanaka T."/>
            <person name="Terpstra P."/>
            <person name="Tognoni A."/>
            <person name="Tosato V."/>
            <person name="Uchiyama S."/>
            <person name="Vandenbol M."/>
            <person name="Vannier F."/>
            <person name="Vassarotti A."/>
            <person name="Viari A."/>
            <person name="Wambutt R."/>
            <person name="Wedler E."/>
            <person name="Wedler H."/>
            <person name="Weitzenegger T."/>
            <person name="Winters P."/>
            <person name="Wipat A."/>
            <person name="Yamamoto H."/>
            <person name="Yamane K."/>
            <person name="Yasumoto K."/>
            <person name="Yata K."/>
            <person name="Yoshida K."/>
            <person name="Yoshikawa H.-F."/>
            <person name="Zumstein E."/>
            <person name="Yoshikawa H."/>
            <person name="Danchin A."/>
        </authorList>
    </citation>
    <scope>NUCLEOTIDE SEQUENCE [LARGE SCALE GENOMIC DNA]</scope>
    <source>
        <strain>168</strain>
    </source>
</reference>
<sequence length="274" mass="31975">MARKISDYHLKKREETQKKFIDLLAQNNYIHISGDMVNSKTKVKVRCRHNHTWQVNYEHFKKGTRCPECRIIEGSLKKRLNISTVKSRYALKGYEILSTYKNCHSKLKAKCPEGHIWEHLPSNFFKGEECFQCKGAKKYTVECAQAAFSDRGFIPLFDTYHHNKENLPFLCKEHIDLGVQYAPLHNMVRGLANCRKCYLLLFTGENSSRWKGGISSLNKTLREAVYEVWTKPSLEKYSFKCAITNSTKDLHVHHYKKNFSEIVKEALSNLSFEL</sequence>
<feature type="chain" id="PRO_0000360588" description="SPbeta prophage-derived uncharacterized protein YomD">
    <location>
        <begin position="1"/>
        <end position="274"/>
    </location>
</feature>
<accession>O31981</accession>
<proteinExistence type="predicted"/>